<protein>
    <recommendedName>
        <fullName evidence="1">Large ribosomal subunit protein uL18</fullName>
    </recommendedName>
    <alternativeName>
        <fullName evidence="2">50S ribosomal protein L18</fullName>
    </alternativeName>
</protein>
<name>RL18_RUEPO</name>
<dbReference type="EMBL" id="CP000031">
    <property type="protein sequence ID" value="AAV93818.1"/>
    <property type="molecule type" value="Genomic_DNA"/>
</dbReference>
<dbReference type="RefSeq" id="WP_011046260.1">
    <property type="nucleotide sequence ID" value="NC_003911.12"/>
</dbReference>
<dbReference type="SMR" id="Q5LW42"/>
<dbReference type="STRING" id="246200.SPO0501"/>
<dbReference type="PaxDb" id="246200-SPO0501"/>
<dbReference type="KEGG" id="sil:SPO0501"/>
<dbReference type="eggNOG" id="COG0256">
    <property type="taxonomic scope" value="Bacteria"/>
</dbReference>
<dbReference type="HOGENOM" id="CLU_098841_0_1_5"/>
<dbReference type="OrthoDB" id="9810939at2"/>
<dbReference type="Proteomes" id="UP000001023">
    <property type="component" value="Chromosome"/>
</dbReference>
<dbReference type="GO" id="GO:0022625">
    <property type="term" value="C:cytosolic large ribosomal subunit"/>
    <property type="evidence" value="ECO:0007669"/>
    <property type="project" value="TreeGrafter"/>
</dbReference>
<dbReference type="GO" id="GO:0008097">
    <property type="term" value="F:5S rRNA binding"/>
    <property type="evidence" value="ECO:0007669"/>
    <property type="project" value="TreeGrafter"/>
</dbReference>
<dbReference type="GO" id="GO:0003735">
    <property type="term" value="F:structural constituent of ribosome"/>
    <property type="evidence" value="ECO:0007669"/>
    <property type="project" value="InterPro"/>
</dbReference>
<dbReference type="GO" id="GO:0006412">
    <property type="term" value="P:translation"/>
    <property type="evidence" value="ECO:0007669"/>
    <property type="project" value="UniProtKB-UniRule"/>
</dbReference>
<dbReference type="CDD" id="cd00432">
    <property type="entry name" value="Ribosomal_L18_L5e"/>
    <property type="match status" value="1"/>
</dbReference>
<dbReference type="FunFam" id="3.30.420.100:FF:000001">
    <property type="entry name" value="50S ribosomal protein L18"/>
    <property type="match status" value="1"/>
</dbReference>
<dbReference type="Gene3D" id="3.30.420.100">
    <property type="match status" value="1"/>
</dbReference>
<dbReference type="HAMAP" id="MF_01337_B">
    <property type="entry name" value="Ribosomal_uL18_B"/>
    <property type="match status" value="1"/>
</dbReference>
<dbReference type="InterPro" id="IPR004389">
    <property type="entry name" value="Ribosomal_uL18_bac-type"/>
</dbReference>
<dbReference type="InterPro" id="IPR005484">
    <property type="entry name" value="Ribosomal_uL18_bac/euk"/>
</dbReference>
<dbReference type="NCBIfam" id="TIGR00060">
    <property type="entry name" value="L18_bact"/>
    <property type="match status" value="1"/>
</dbReference>
<dbReference type="PANTHER" id="PTHR12899">
    <property type="entry name" value="39S RIBOSOMAL PROTEIN L18, MITOCHONDRIAL"/>
    <property type="match status" value="1"/>
</dbReference>
<dbReference type="PANTHER" id="PTHR12899:SF3">
    <property type="entry name" value="LARGE RIBOSOMAL SUBUNIT PROTEIN UL18M"/>
    <property type="match status" value="1"/>
</dbReference>
<dbReference type="Pfam" id="PF00861">
    <property type="entry name" value="Ribosomal_L18p"/>
    <property type="match status" value="1"/>
</dbReference>
<dbReference type="SUPFAM" id="SSF53137">
    <property type="entry name" value="Translational machinery components"/>
    <property type="match status" value="1"/>
</dbReference>
<organism>
    <name type="scientific">Ruegeria pomeroyi (strain ATCC 700808 / DSM 15171 / DSS-3)</name>
    <name type="common">Silicibacter pomeroyi</name>
    <dbReference type="NCBI Taxonomy" id="246200"/>
    <lineage>
        <taxon>Bacteria</taxon>
        <taxon>Pseudomonadati</taxon>
        <taxon>Pseudomonadota</taxon>
        <taxon>Alphaproteobacteria</taxon>
        <taxon>Rhodobacterales</taxon>
        <taxon>Roseobacteraceae</taxon>
        <taxon>Ruegeria</taxon>
    </lineage>
</organism>
<feature type="chain" id="PRO_0000131340" description="Large ribosomal subunit protein uL18">
    <location>
        <begin position="1"/>
        <end position="119"/>
    </location>
</feature>
<reference key="1">
    <citation type="journal article" date="2004" name="Nature">
        <title>Genome sequence of Silicibacter pomeroyi reveals adaptations to the marine environment.</title>
        <authorList>
            <person name="Moran M.A."/>
            <person name="Buchan A."/>
            <person name="Gonzalez J.M."/>
            <person name="Heidelberg J.F."/>
            <person name="Whitman W.B."/>
            <person name="Kiene R.P."/>
            <person name="Henriksen J.R."/>
            <person name="King G.M."/>
            <person name="Belas R."/>
            <person name="Fuqua C."/>
            <person name="Brinkac L.M."/>
            <person name="Lewis M."/>
            <person name="Johri S."/>
            <person name="Weaver B."/>
            <person name="Pai G."/>
            <person name="Eisen J.A."/>
            <person name="Rahe E."/>
            <person name="Sheldon W.M."/>
            <person name="Ye W."/>
            <person name="Miller T.R."/>
            <person name="Carlton J."/>
            <person name="Rasko D.A."/>
            <person name="Paulsen I.T."/>
            <person name="Ren Q."/>
            <person name="Daugherty S.C."/>
            <person name="DeBoy R.T."/>
            <person name="Dodson R.J."/>
            <person name="Durkin A.S."/>
            <person name="Madupu R."/>
            <person name="Nelson W.C."/>
            <person name="Sullivan S.A."/>
            <person name="Rosovitz M.J."/>
            <person name="Haft D.H."/>
            <person name="Selengut J."/>
            <person name="Ward N."/>
        </authorList>
    </citation>
    <scope>NUCLEOTIDE SEQUENCE [LARGE SCALE GENOMIC DNA]</scope>
    <source>
        <strain>ATCC 700808 / DSM 15171 / DSS-3</strain>
    </source>
</reference>
<reference key="2">
    <citation type="journal article" date="2014" name="Stand. Genomic Sci.">
        <title>An updated genome annotation for the model marine bacterium Ruegeria pomeroyi DSS-3.</title>
        <authorList>
            <person name="Rivers A.R."/>
            <person name="Smith C.B."/>
            <person name="Moran M.A."/>
        </authorList>
    </citation>
    <scope>GENOME REANNOTATION</scope>
    <source>
        <strain>ATCC 700808 / DSM 15171 / DSS-3</strain>
    </source>
</reference>
<keyword id="KW-1185">Reference proteome</keyword>
<keyword id="KW-0687">Ribonucleoprotein</keyword>
<keyword id="KW-0689">Ribosomal protein</keyword>
<keyword id="KW-0694">RNA-binding</keyword>
<keyword id="KW-0699">rRNA-binding</keyword>
<comment type="function">
    <text evidence="1">This is one of the proteins that bind and probably mediate the attachment of the 5S RNA into the large ribosomal subunit, where it forms part of the central protuberance.</text>
</comment>
<comment type="subunit">
    <text evidence="1">Part of the 50S ribosomal subunit; part of the 5S rRNA/L5/L18/L25 subcomplex. Contacts the 5S and 23S rRNAs.</text>
</comment>
<comment type="similarity">
    <text evidence="1">Belongs to the universal ribosomal protein uL18 family.</text>
</comment>
<gene>
    <name evidence="1" type="primary">rplR</name>
    <name type="ordered locus">SPO0501</name>
</gene>
<proteinExistence type="inferred from homology"/>
<accession>Q5LW42</accession>
<sequence>MANSKRTLFLKRRLRVRNKLRKVNAGRLRLSVHRSNKNISAQLIDDVRGVTLAAASTMEKDLGVVGKNNVEAAKKVGAAIAERAKKAGVEEAYFDRGGFLFHGKVKALADAAREGGLKI</sequence>
<evidence type="ECO:0000255" key="1">
    <source>
        <dbReference type="HAMAP-Rule" id="MF_01337"/>
    </source>
</evidence>
<evidence type="ECO:0000305" key="2"/>